<accession>B2IIK5</accession>
<evidence type="ECO:0000255" key="1">
    <source>
        <dbReference type="HAMAP-Rule" id="MF_01864"/>
    </source>
</evidence>
<evidence type="ECO:0000255" key="2">
    <source>
        <dbReference type="PROSITE-ProRule" id="PRU01266"/>
    </source>
</evidence>
<evidence type="ECO:0000256" key="3">
    <source>
        <dbReference type="SAM" id="MobiDB-lite"/>
    </source>
</evidence>
<dbReference type="EC" id="2.8.4.3" evidence="1"/>
<dbReference type="EMBL" id="CP001016">
    <property type="protein sequence ID" value="ACB94698.1"/>
    <property type="molecule type" value="Genomic_DNA"/>
</dbReference>
<dbReference type="RefSeq" id="WP_012384055.1">
    <property type="nucleotide sequence ID" value="NC_010581.1"/>
</dbReference>
<dbReference type="SMR" id="B2IIK5"/>
<dbReference type="STRING" id="395963.Bind_1055"/>
<dbReference type="KEGG" id="bid:Bind_1055"/>
<dbReference type="eggNOG" id="COG0621">
    <property type="taxonomic scope" value="Bacteria"/>
</dbReference>
<dbReference type="HOGENOM" id="CLU_018697_2_0_5"/>
<dbReference type="OrthoDB" id="9805215at2"/>
<dbReference type="Proteomes" id="UP000001695">
    <property type="component" value="Chromosome"/>
</dbReference>
<dbReference type="GO" id="GO:0005829">
    <property type="term" value="C:cytosol"/>
    <property type="evidence" value="ECO:0007669"/>
    <property type="project" value="TreeGrafter"/>
</dbReference>
<dbReference type="GO" id="GO:0051539">
    <property type="term" value="F:4 iron, 4 sulfur cluster binding"/>
    <property type="evidence" value="ECO:0007669"/>
    <property type="project" value="UniProtKB-UniRule"/>
</dbReference>
<dbReference type="GO" id="GO:0046872">
    <property type="term" value="F:metal ion binding"/>
    <property type="evidence" value="ECO:0007669"/>
    <property type="project" value="UniProtKB-KW"/>
</dbReference>
<dbReference type="GO" id="GO:0035597">
    <property type="term" value="F:N6-isopentenyladenosine methylthiotransferase activity"/>
    <property type="evidence" value="ECO:0007669"/>
    <property type="project" value="TreeGrafter"/>
</dbReference>
<dbReference type="CDD" id="cd01335">
    <property type="entry name" value="Radical_SAM"/>
    <property type="match status" value="1"/>
</dbReference>
<dbReference type="FunFam" id="3.40.50.12160:FF:000003">
    <property type="entry name" value="CDK5 regulatory subunit-associated protein 1"/>
    <property type="match status" value="1"/>
</dbReference>
<dbReference type="FunFam" id="3.80.30.20:FF:000001">
    <property type="entry name" value="tRNA-2-methylthio-N(6)-dimethylallyladenosine synthase 2"/>
    <property type="match status" value="1"/>
</dbReference>
<dbReference type="Gene3D" id="3.40.50.12160">
    <property type="entry name" value="Methylthiotransferase, N-terminal domain"/>
    <property type="match status" value="1"/>
</dbReference>
<dbReference type="Gene3D" id="3.80.30.20">
    <property type="entry name" value="tm_1862 like domain"/>
    <property type="match status" value="1"/>
</dbReference>
<dbReference type="HAMAP" id="MF_01864">
    <property type="entry name" value="tRNA_metthiotr_MiaB"/>
    <property type="match status" value="1"/>
</dbReference>
<dbReference type="InterPro" id="IPR006638">
    <property type="entry name" value="Elp3/MiaA/NifB-like_rSAM"/>
</dbReference>
<dbReference type="InterPro" id="IPR005839">
    <property type="entry name" value="Methylthiotransferase"/>
</dbReference>
<dbReference type="InterPro" id="IPR020612">
    <property type="entry name" value="Methylthiotransferase_CS"/>
</dbReference>
<dbReference type="InterPro" id="IPR013848">
    <property type="entry name" value="Methylthiotransferase_N"/>
</dbReference>
<dbReference type="InterPro" id="IPR038135">
    <property type="entry name" value="Methylthiotransferase_N_sf"/>
</dbReference>
<dbReference type="InterPro" id="IPR006463">
    <property type="entry name" value="MiaB_methiolase"/>
</dbReference>
<dbReference type="InterPro" id="IPR007197">
    <property type="entry name" value="rSAM"/>
</dbReference>
<dbReference type="InterPro" id="IPR023404">
    <property type="entry name" value="rSAM_horseshoe"/>
</dbReference>
<dbReference type="InterPro" id="IPR002792">
    <property type="entry name" value="TRAM_dom"/>
</dbReference>
<dbReference type="NCBIfam" id="TIGR01574">
    <property type="entry name" value="miaB-methiolase"/>
    <property type="match status" value="1"/>
</dbReference>
<dbReference type="NCBIfam" id="TIGR00089">
    <property type="entry name" value="MiaB/RimO family radical SAM methylthiotransferase"/>
    <property type="match status" value="1"/>
</dbReference>
<dbReference type="PANTHER" id="PTHR43020">
    <property type="entry name" value="CDK5 REGULATORY SUBUNIT-ASSOCIATED PROTEIN 1"/>
    <property type="match status" value="1"/>
</dbReference>
<dbReference type="PANTHER" id="PTHR43020:SF2">
    <property type="entry name" value="MITOCHONDRIAL TRNA METHYLTHIOTRANSFERASE CDK5RAP1"/>
    <property type="match status" value="1"/>
</dbReference>
<dbReference type="Pfam" id="PF04055">
    <property type="entry name" value="Radical_SAM"/>
    <property type="match status" value="1"/>
</dbReference>
<dbReference type="Pfam" id="PF01938">
    <property type="entry name" value="TRAM"/>
    <property type="match status" value="1"/>
</dbReference>
<dbReference type="Pfam" id="PF00919">
    <property type="entry name" value="UPF0004"/>
    <property type="match status" value="1"/>
</dbReference>
<dbReference type="SFLD" id="SFLDF00273">
    <property type="entry name" value="(dimethylallyl)adenosine_tRNA"/>
    <property type="match status" value="1"/>
</dbReference>
<dbReference type="SFLD" id="SFLDG01082">
    <property type="entry name" value="B12-binding_domain_containing"/>
    <property type="match status" value="1"/>
</dbReference>
<dbReference type="SFLD" id="SFLDS00029">
    <property type="entry name" value="Radical_SAM"/>
    <property type="match status" value="1"/>
</dbReference>
<dbReference type="SMART" id="SM00729">
    <property type="entry name" value="Elp3"/>
    <property type="match status" value="1"/>
</dbReference>
<dbReference type="SUPFAM" id="SSF102114">
    <property type="entry name" value="Radical SAM enzymes"/>
    <property type="match status" value="1"/>
</dbReference>
<dbReference type="PROSITE" id="PS51449">
    <property type="entry name" value="MTTASE_N"/>
    <property type="match status" value="1"/>
</dbReference>
<dbReference type="PROSITE" id="PS01278">
    <property type="entry name" value="MTTASE_RADICAL"/>
    <property type="match status" value="1"/>
</dbReference>
<dbReference type="PROSITE" id="PS51918">
    <property type="entry name" value="RADICAL_SAM"/>
    <property type="match status" value="1"/>
</dbReference>
<dbReference type="PROSITE" id="PS50926">
    <property type="entry name" value="TRAM"/>
    <property type="match status" value="1"/>
</dbReference>
<proteinExistence type="inferred from homology"/>
<comment type="function">
    <text evidence="1">Catalyzes the methylthiolation of N6-(dimethylallyl)adenosine (i(6)A), leading to the formation of 2-methylthio-N6-(dimethylallyl)adenosine (ms(2)i(6)A) at position 37 in tRNAs that read codons beginning with uridine.</text>
</comment>
<comment type="catalytic activity">
    <reaction evidence="1">
        <text>N(6)-dimethylallyladenosine(37) in tRNA + (sulfur carrier)-SH + AH2 + 2 S-adenosyl-L-methionine = 2-methylsulfanyl-N(6)-dimethylallyladenosine(37) in tRNA + (sulfur carrier)-H + 5'-deoxyadenosine + L-methionine + A + S-adenosyl-L-homocysteine + 2 H(+)</text>
        <dbReference type="Rhea" id="RHEA:37067"/>
        <dbReference type="Rhea" id="RHEA-COMP:10375"/>
        <dbReference type="Rhea" id="RHEA-COMP:10376"/>
        <dbReference type="Rhea" id="RHEA-COMP:14737"/>
        <dbReference type="Rhea" id="RHEA-COMP:14739"/>
        <dbReference type="ChEBI" id="CHEBI:13193"/>
        <dbReference type="ChEBI" id="CHEBI:15378"/>
        <dbReference type="ChEBI" id="CHEBI:17319"/>
        <dbReference type="ChEBI" id="CHEBI:17499"/>
        <dbReference type="ChEBI" id="CHEBI:29917"/>
        <dbReference type="ChEBI" id="CHEBI:57844"/>
        <dbReference type="ChEBI" id="CHEBI:57856"/>
        <dbReference type="ChEBI" id="CHEBI:59789"/>
        <dbReference type="ChEBI" id="CHEBI:64428"/>
        <dbReference type="ChEBI" id="CHEBI:74415"/>
        <dbReference type="ChEBI" id="CHEBI:74417"/>
        <dbReference type="EC" id="2.8.4.3"/>
    </reaction>
</comment>
<comment type="cofactor">
    <cofactor evidence="1">
        <name>[4Fe-4S] cluster</name>
        <dbReference type="ChEBI" id="CHEBI:49883"/>
    </cofactor>
    <text evidence="1">Binds 2 [4Fe-4S] clusters. One cluster is coordinated with 3 cysteines and an exchangeable S-adenosyl-L-methionine.</text>
</comment>
<comment type="subunit">
    <text evidence="1">Monomer.</text>
</comment>
<comment type="subcellular location">
    <subcellularLocation>
        <location evidence="1">Cytoplasm</location>
    </subcellularLocation>
</comment>
<comment type="similarity">
    <text evidence="1">Belongs to the methylthiotransferase family. MiaB subfamily.</text>
</comment>
<gene>
    <name evidence="1" type="primary">miaB</name>
    <name type="ordered locus">Bind_1055</name>
</gene>
<sequence length="510" mass="55495">MSGFNDSPVPESAEKADGLLSQERGTQDPLVNTRKLFVKSYGCQMNVYDAERMADLLAPEGYAETSAPEDADLVILNTCHIREHAAEKVFSELGKLRLLKAEQQAAGRPVKIVVAGCVAQAEGEEILRRQKAVDLVVGPQSYHRLPDLLRRVAHTPGLVDTEFPAEDKFDHLVAPQPEKIAERGVGAFVTVQEGCDKFCSFCVVPYTRGAETSRPVEAILAEVETLIASGVREVTLIGQNVNAYHGFDAMTGAPASLASLMARVAAMPGLLRIRYTTSHPNDMGEDLIAAHRDIPALMPFLHLPVQSGSDKILAAMNRRHKAGDYLELIASIRAARPDIALSSDFIVGFPGETEADFEATLALIEQVGFASAFSFKYSQRPGTPGADRPDQIDEDVKAQRLARLQALLEEQRQAFNKAMIGRVLPVLFEKPGRHPGQIAGKTPYLQALYAEGDKALIGTVQPVEILEAGPNSFHGRLLARETGQESAQGQESAQGMERMEQNARAWEVPV</sequence>
<reference key="1">
    <citation type="journal article" date="2010" name="J. Bacteriol.">
        <title>Complete genome sequence of Beijerinckia indica subsp. indica.</title>
        <authorList>
            <person name="Tamas I."/>
            <person name="Dedysh S.N."/>
            <person name="Liesack W."/>
            <person name="Stott M.B."/>
            <person name="Alam M."/>
            <person name="Murrell J.C."/>
            <person name="Dunfield P.F."/>
        </authorList>
    </citation>
    <scope>NUCLEOTIDE SEQUENCE [LARGE SCALE GENOMIC DNA]</scope>
    <source>
        <strain>ATCC 9039 / DSM 1715 / NCIMB 8712</strain>
    </source>
</reference>
<keyword id="KW-0004">4Fe-4S</keyword>
<keyword id="KW-0963">Cytoplasm</keyword>
<keyword id="KW-0408">Iron</keyword>
<keyword id="KW-0411">Iron-sulfur</keyword>
<keyword id="KW-0479">Metal-binding</keyword>
<keyword id="KW-1185">Reference proteome</keyword>
<keyword id="KW-0949">S-adenosyl-L-methionine</keyword>
<keyword id="KW-0808">Transferase</keyword>
<keyword id="KW-0819">tRNA processing</keyword>
<protein>
    <recommendedName>
        <fullName evidence="1">tRNA-2-methylthio-N(6)-dimethylallyladenosine synthase</fullName>
        <ecNumber evidence="1">2.8.4.3</ecNumber>
    </recommendedName>
    <alternativeName>
        <fullName evidence="1">(Dimethylallyl)adenosine tRNA methylthiotransferase MiaB</fullName>
    </alternativeName>
    <alternativeName>
        <fullName evidence="1">tRNA-i(6)A37 methylthiotransferase</fullName>
    </alternativeName>
</protein>
<organism>
    <name type="scientific">Beijerinckia indica subsp. indica (strain ATCC 9039 / DSM 1715 / NCIMB 8712)</name>
    <dbReference type="NCBI Taxonomy" id="395963"/>
    <lineage>
        <taxon>Bacteria</taxon>
        <taxon>Pseudomonadati</taxon>
        <taxon>Pseudomonadota</taxon>
        <taxon>Alphaproteobacteria</taxon>
        <taxon>Hyphomicrobiales</taxon>
        <taxon>Beijerinckiaceae</taxon>
        <taxon>Beijerinckia</taxon>
    </lineage>
</organism>
<feature type="chain" id="PRO_0000374150" description="tRNA-2-methylthio-N(6)-dimethylallyladenosine synthase">
    <location>
        <begin position="1"/>
        <end position="510"/>
    </location>
</feature>
<feature type="domain" description="MTTase N-terminal" evidence="1">
    <location>
        <begin position="34"/>
        <end position="154"/>
    </location>
</feature>
<feature type="domain" description="Radical SAM core" evidence="2">
    <location>
        <begin position="181"/>
        <end position="414"/>
    </location>
</feature>
<feature type="domain" description="TRAM" evidence="1">
    <location>
        <begin position="417"/>
        <end position="479"/>
    </location>
</feature>
<feature type="region of interest" description="Disordered" evidence="3">
    <location>
        <begin position="1"/>
        <end position="25"/>
    </location>
</feature>
<feature type="region of interest" description="Disordered" evidence="3">
    <location>
        <begin position="484"/>
        <end position="510"/>
    </location>
</feature>
<feature type="compositionally biased region" description="Polar residues" evidence="3">
    <location>
        <begin position="484"/>
        <end position="493"/>
    </location>
</feature>
<feature type="binding site" evidence="1">
    <location>
        <position position="43"/>
    </location>
    <ligand>
        <name>[4Fe-4S] cluster</name>
        <dbReference type="ChEBI" id="CHEBI:49883"/>
        <label>1</label>
    </ligand>
</feature>
<feature type="binding site" evidence="1">
    <location>
        <position position="79"/>
    </location>
    <ligand>
        <name>[4Fe-4S] cluster</name>
        <dbReference type="ChEBI" id="CHEBI:49883"/>
        <label>1</label>
    </ligand>
</feature>
<feature type="binding site" evidence="1">
    <location>
        <position position="117"/>
    </location>
    <ligand>
        <name>[4Fe-4S] cluster</name>
        <dbReference type="ChEBI" id="CHEBI:49883"/>
        <label>1</label>
    </ligand>
</feature>
<feature type="binding site" evidence="1">
    <location>
        <position position="195"/>
    </location>
    <ligand>
        <name>[4Fe-4S] cluster</name>
        <dbReference type="ChEBI" id="CHEBI:49883"/>
        <label>2</label>
        <note>4Fe-4S-S-AdoMet</note>
    </ligand>
</feature>
<feature type="binding site" evidence="1">
    <location>
        <position position="199"/>
    </location>
    <ligand>
        <name>[4Fe-4S] cluster</name>
        <dbReference type="ChEBI" id="CHEBI:49883"/>
        <label>2</label>
        <note>4Fe-4S-S-AdoMet</note>
    </ligand>
</feature>
<feature type="binding site" evidence="1">
    <location>
        <position position="202"/>
    </location>
    <ligand>
        <name>[4Fe-4S] cluster</name>
        <dbReference type="ChEBI" id="CHEBI:49883"/>
        <label>2</label>
        <note>4Fe-4S-S-AdoMet</note>
    </ligand>
</feature>
<name>MIAB_BEII9</name>